<reference key="1">
    <citation type="journal article" date="2011" name="J. Bacteriol.">
        <title>Comparative genomics of 28 Salmonella enterica isolates: evidence for CRISPR-mediated adaptive sublineage evolution.</title>
        <authorList>
            <person name="Fricke W.F."/>
            <person name="Mammel M.K."/>
            <person name="McDermott P.F."/>
            <person name="Tartera C."/>
            <person name="White D.G."/>
            <person name="Leclerc J.E."/>
            <person name="Ravel J."/>
            <person name="Cebula T.A."/>
        </authorList>
    </citation>
    <scope>NUCLEOTIDE SEQUENCE [LARGE SCALE GENOMIC DNA]</scope>
    <source>
        <strain>SL476</strain>
    </source>
</reference>
<organism>
    <name type="scientific">Salmonella heidelberg (strain SL476)</name>
    <dbReference type="NCBI Taxonomy" id="454169"/>
    <lineage>
        <taxon>Bacteria</taxon>
        <taxon>Pseudomonadati</taxon>
        <taxon>Pseudomonadota</taxon>
        <taxon>Gammaproteobacteria</taxon>
        <taxon>Enterobacterales</taxon>
        <taxon>Enterobacteriaceae</taxon>
        <taxon>Salmonella</taxon>
    </lineage>
</organism>
<sequence>MNRIHAVILDWAGTTVDFGSFAPTQIFVEAFRQAFDVEITLAEARVPMGLGKWQHIEALGKLPAVDARWQAKFGRSMSAADIDAIYAAFMPLQIAKVVDFSSPIAGVIDTIAALRAEGIKIGSCSGYPRAVMERLVPAAAEHGYRPDHWVATDDLAAGGRPGPWMALQNVIALGIDAVAHCVKVDDAAPGISEGLNAGMWTVGLAVSGNEFGATWDAYQTMSKEDVAVRREHAASKLYAAGAHYVVDSLADLPGVIAHINARLAQGERP</sequence>
<proteinExistence type="inferred from homology"/>
<name>PHNX_SALHS</name>
<comment type="function">
    <text evidence="1">Involved in phosphonate degradation.</text>
</comment>
<comment type="catalytic activity">
    <reaction evidence="1">
        <text>phosphonoacetaldehyde + H2O = acetaldehyde + phosphate + H(+)</text>
        <dbReference type="Rhea" id="RHEA:18905"/>
        <dbReference type="ChEBI" id="CHEBI:15343"/>
        <dbReference type="ChEBI" id="CHEBI:15377"/>
        <dbReference type="ChEBI" id="CHEBI:15378"/>
        <dbReference type="ChEBI" id="CHEBI:43474"/>
        <dbReference type="ChEBI" id="CHEBI:58383"/>
        <dbReference type="EC" id="3.11.1.1"/>
    </reaction>
</comment>
<comment type="cofactor">
    <cofactor evidence="1">
        <name>Mg(2+)</name>
        <dbReference type="ChEBI" id="CHEBI:18420"/>
    </cofactor>
    <text evidence="1">Binds 1 Mg(2+) ion per subunit.</text>
</comment>
<comment type="subunit">
    <text evidence="1">Homodimer.</text>
</comment>
<comment type="similarity">
    <text evidence="1">Belongs to the HAD-like hydrolase superfamily. PhnX family.</text>
</comment>
<gene>
    <name evidence="1" type="primary">phnX</name>
    <name type="ordered locus">SeHA_C0534</name>
</gene>
<accession>B4T9C7</accession>
<feature type="chain" id="PRO_1000144840" description="Phosphonoacetaldehyde hydrolase">
    <location>
        <begin position="1"/>
        <end position="269"/>
    </location>
</feature>
<feature type="active site" description="Nucleophile" evidence="1">
    <location>
        <position position="10"/>
    </location>
</feature>
<feature type="active site" description="Schiff-base intermediate with substrate" evidence="1">
    <location>
        <position position="52"/>
    </location>
</feature>
<feature type="binding site" evidence="1">
    <location>
        <position position="10"/>
    </location>
    <ligand>
        <name>Mg(2+)</name>
        <dbReference type="ChEBI" id="CHEBI:18420"/>
    </ligand>
</feature>
<feature type="binding site" evidence="1">
    <location>
        <position position="12"/>
    </location>
    <ligand>
        <name>Mg(2+)</name>
        <dbReference type="ChEBI" id="CHEBI:18420"/>
    </ligand>
</feature>
<feature type="binding site" evidence="1">
    <location>
        <position position="186"/>
    </location>
    <ligand>
        <name>Mg(2+)</name>
        <dbReference type="ChEBI" id="CHEBI:18420"/>
    </ligand>
</feature>
<keyword id="KW-0378">Hydrolase</keyword>
<keyword id="KW-0460">Magnesium</keyword>
<keyword id="KW-0479">Metal-binding</keyword>
<keyword id="KW-0704">Schiff base</keyword>
<dbReference type="EC" id="3.11.1.1" evidence="1"/>
<dbReference type="EMBL" id="CP001120">
    <property type="protein sequence ID" value="ACF66343.1"/>
    <property type="molecule type" value="Genomic_DNA"/>
</dbReference>
<dbReference type="RefSeq" id="WP_001530701.1">
    <property type="nucleotide sequence ID" value="NC_011083.1"/>
</dbReference>
<dbReference type="SMR" id="B4T9C7"/>
<dbReference type="KEGG" id="seh:SeHA_C0534"/>
<dbReference type="HOGENOM" id="CLU_045011_12_0_6"/>
<dbReference type="Proteomes" id="UP000001866">
    <property type="component" value="Chromosome"/>
</dbReference>
<dbReference type="GO" id="GO:0005829">
    <property type="term" value="C:cytosol"/>
    <property type="evidence" value="ECO:0007669"/>
    <property type="project" value="TreeGrafter"/>
</dbReference>
<dbReference type="GO" id="GO:0000287">
    <property type="term" value="F:magnesium ion binding"/>
    <property type="evidence" value="ECO:0007669"/>
    <property type="project" value="UniProtKB-UniRule"/>
</dbReference>
<dbReference type="GO" id="GO:0008967">
    <property type="term" value="F:phosphoglycolate phosphatase activity"/>
    <property type="evidence" value="ECO:0007669"/>
    <property type="project" value="TreeGrafter"/>
</dbReference>
<dbReference type="GO" id="GO:0050194">
    <property type="term" value="F:phosphonoacetaldehyde hydrolase activity"/>
    <property type="evidence" value="ECO:0007669"/>
    <property type="project" value="UniProtKB-UniRule"/>
</dbReference>
<dbReference type="GO" id="GO:0006281">
    <property type="term" value="P:DNA repair"/>
    <property type="evidence" value="ECO:0007669"/>
    <property type="project" value="TreeGrafter"/>
</dbReference>
<dbReference type="GO" id="GO:0019700">
    <property type="term" value="P:organic phosphonate catabolic process"/>
    <property type="evidence" value="ECO:0007669"/>
    <property type="project" value="InterPro"/>
</dbReference>
<dbReference type="CDD" id="cd02586">
    <property type="entry name" value="HAD_PHN"/>
    <property type="match status" value="1"/>
</dbReference>
<dbReference type="FunFam" id="1.10.150.240:FF:000006">
    <property type="entry name" value="Phosphonoacetaldehyde hydrolase"/>
    <property type="match status" value="1"/>
</dbReference>
<dbReference type="FunFam" id="3.40.50.1000:FF:000072">
    <property type="entry name" value="Phosphonoacetaldehyde hydrolase"/>
    <property type="match status" value="1"/>
</dbReference>
<dbReference type="Gene3D" id="3.40.50.1000">
    <property type="entry name" value="HAD superfamily/HAD-like"/>
    <property type="match status" value="1"/>
</dbReference>
<dbReference type="Gene3D" id="1.10.150.240">
    <property type="entry name" value="Putative phosphatase, domain 2"/>
    <property type="match status" value="1"/>
</dbReference>
<dbReference type="HAMAP" id="MF_01375">
    <property type="entry name" value="PhnX"/>
    <property type="match status" value="1"/>
</dbReference>
<dbReference type="InterPro" id="IPR050155">
    <property type="entry name" value="HAD-like_hydrolase_sf"/>
</dbReference>
<dbReference type="InterPro" id="IPR036412">
    <property type="entry name" value="HAD-like_sf"/>
</dbReference>
<dbReference type="InterPro" id="IPR006439">
    <property type="entry name" value="HAD-SF_hydro_IA"/>
</dbReference>
<dbReference type="InterPro" id="IPR023214">
    <property type="entry name" value="HAD_sf"/>
</dbReference>
<dbReference type="InterPro" id="IPR023198">
    <property type="entry name" value="PGP-like_dom2"/>
</dbReference>
<dbReference type="InterPro" id="IPR006323">
    <property type="entry name" value="Phosphonoacetald_hydro"/>
</dbReference>
<dbReference type="NCBIfam" id="TIGR01509">
    <property type="entry name" value="HAD-SF-IA-v3"/>
    <property type="match status" value="1"/>
</dbReference>
<dbReference type="NCBIfam" id="TIGR01422">
    <property type="entry name" value="phosphonatase"/>
    <property type="match status" value="1"/>
</dbReference>
<dbReference type="PANTHER" id="PTHR43434">
    <property type="entry name" value="PHOSPHOGLYCOLATE PHOSPHATASE"/>
    <property type="match status" value="1"/>
</dbReference>
<dbReference type="PANTHER" id="PTHR43434:SF19">
    <property type="entry name" value="PHOSPHONOACETALDEHYDE HYDROLASE"/>
    <property type="match status" value="1"/>
</dbReference>
<dbReference type="Pfam" id="PF00702">
    <property type="entry name" value="Hydrolase"/>
    <property type="match status" value="1"/>
</dbReference>
<dbReference type="SFLD" id="SFLDG01129">
    <property type="entry name" value="C1.5:_HAD__Beta-PGM__Phosphata"/>
    <property type="match status" value="1"/>
</dbReference>
<dbReference type="SFLD" id="SFLDF00038">
    <property type="entry name" value="phosphonoacetaldehyde_hydrolas"/>
    <property type="match status" value="1"/>
</dbReference>
<dbReference type="SUPFAM" id="SSF56784">
    <property type="entry name" value="HAD-like"/>
    <property type="match status" value="1"/>
</dbReference>
<evidence type="ECO:0000255" key="1">
    <source>
        <dbReference type="HAMAP-Rule" id="MF_01375"/>
    </source>
</evidence>
<protein>
    <recommendedName>
        <fullName evidence="1">Phosphonoacetaldehyde hydrolase</fullName>
        <shortName evidence="1">Phosphonatase</shortName>
        <ecNumber evidence="1">3.11.1.1</ecNumber>
    </recommendedName>
    <alternativeName>
        <fullName evidence="1">Phosphonoacetaldehyde phosphonohydrolase</fullName>
    </alternativeName>
</protein>